<comment type="function">
    <text evidence="2">(Microbial infection) Modulates replication of duck Tembusu virus in salivary glands and virus release into the saliva, probably via the regulation of antimicrobial peptides expression in response to duck Tembusu virus infection.</text>
</comment>
<comment type="induction">
    <text evidence="2">(Microbial infection) Up-regulated in salivary glands following duck Tembusu virus infection.</text>
</comment>
<comment type="disruption phenotype">
    <text evidence="2">(Microbial infection) RNAi-mediated knockdown results in reduced replication of duck Tembusu virus in salivary gland after an infectious blood meal (PubMed:37277542). Reduced release of duck Tembusu virus in saliva (PubMed:37277542). Up-regulation of antimicrobial peptides in response to duck Tembusu virus infection (PubMed:37277542). Increased expression of macroglobulin complement-related factor (PubMed:37277542).</text>
</comment>
<organism>
    <name type="scientific">Aedes albopictus</name>
    <name type="common">Asian tiger mosquito</name>
    <name type="synonym">Stegomyia albopicta</name>
    <dbReference type="NCBI Taxonomy" id="7160"/>
    <lineage>
        <taxon>Eukaryota</taxon>
        <taxon>Metazoa</taxon>
        <taxon>Ecdysozoa</taxon>
        <taxon>Arthropoda</taxon>
        <taxon>Hexapoda</taxon>
        <taxon>Insecta</taxon>
        <taxon>Pterygota</taxon>
        <taxon>Neoptera</taxon>
        <taxon>Endopterygota</taxon>
        <taxon>Diptera</taxon>
        <taxon>Nematocera</taxon>
        <taxon>Culicoidea</taxon>
        <taxon>Culicidae</taxon>
        <taxon>Culicinae</taxon>
        <taxon>Aedini</taxon>
        <taxon>Aedes</taxon>
        <taxon>Stegomyia</taxon>
    </lineage>
</organism>
<proteinExistence type="evidence at transcript level"/>
<sequence length="315" mass="35673">MPVSYDFVILLALFIVLARSHPLPEETAGDASNKCTLSEEDLSNLKSAIYSAASAKSSETAILSNDTLTACPMLSNFTEMLKTVATDMEVLKTQGVSNAEVELLRESFEEKLNELAKNKDIFERQAGQEASKTEGAMVEKINQLQLQMTKLQEEIEQQTKQMYADMIEYVFQRLKTNDTDAIDSYAQILFKAKMHDLFMKLKTDRWVLWNMLNYVEQKKDKLVGKRVLNTVINQVISLNRSNPDELEIGKHSLVNLLCWTSTAKTVYGAVQEDQKMFYLTKLYFPAEKGCTECKDVTSRTLCSNTYPKSIAKAYG</sequence>
<keyword id="KW-0175">Coiled coil</keyword>
<keyword id="KW-0732">Signal</keyword>
<dbReference type="SMR" id="C0HMB7"/>
<dbReference type="EnsemblMetazoa" id="AALF004421-RA">
    <property type="protein sequence ID" value="AALF004421-PA"/>
    <property type="gene ID" value="AALF004421"/>
</dbReference>
<dbReference type="Proteomes" id="UP000069940">
    <property type="component" value="Unassembled WGS sequence"/>
</dbReference>
<feature type="signal peptide" evidence="1">
    <location>
        <begin position="1"/>
        <end position="20"/>
    </location>
</feature>
<feature type="chain" id="PRO_0000460823" description="Salivary protein SG34" evidence="1">
    <location>
        <begin position="21"/>
        <end position="315"/>
    </location>
</feature>
<feature type="coiled-coil region" evidence="1">
    <location>
        <begin position="98"/>
        <end position="161"/>
    </location>
</feature>
<name>34K1_AEDAL</name>
<reference evidence="3" key="1">
    <citation type="journal article" date="2023" name="Sci. Rep.">
        <title>34-kDa salivary protein enhances duck Tembusu virus infectivity in the salivary glands of Aedes albopictus by modulating the innate immune response.</title>
        <authorList>
            <person name="Sri-In C."/>
            <person name="Thontiravong A."/>
            <person name="Bartholomay L.C."/>
            <person name="Wechtaisong W."/>
            <person name="Thongmeesee K."/>
            <person name="Riana E."/>
            <person name="Tiawsirisup S."/>
        </authorList>
    </citation>
    <scope>FUNCTION (MICROBIAL INFECTION)</scope>
    <scope>INDUCTION (MICROBIAL INFECTION)</scope>
    <scope>DISRUPTION PHENOTYPE (MICROBIAL INFECTION)</scope>
</reference>
<accession>C0HMB7</accession>
<evidence type="ECO:0000255" key="1"/>
<evidence type="ECO:0000269" key="2">
    <source>
    </source>
</evidence>
<evidence type="ECO:0000305" key="3"/>
<protein>
    <recommendedName>
        <fullName evidence="3">Salivary protein SG34</fullName>
    </recommendedName>
</protein>